<dbReference type="EC" id="1.11.1.21" evidence="1"/>
<dbReference type="EMBL" id="CP000494">
    <property type="protein sequence ID" value="ABQ38299.1"/>
    <property type="molecule type" value="Genomic_DNA"/>
</dbReference>
<dbReference type="RefSeq" id="WP_012046240.1">
    <property type="nucleotide sequence ID" value="NC_009485.1"/>
</dbReference>
<dbReference type="SMR" id="A5EQ55"/>
<dbReference type="STRING" id="288000.BBta_6389"/>
<dbReference type="PeroxiBase" id="3627">
    <property type="entry name" value="BRspCP01_BTAi1"/>
</dbReference>
<dbReference type="KEGG" id="bbt:BBta_6389"/>
<dbReference type="eggNOG" id="COG0376">
    <property type="taxonomic scope" value="Bacteria"/>
</dbReference>
<dbReference type="HOGENOM" id="CLU_025424_2_0_5"/>
<dbReference type="OrthoDB" id="9759743at2"/>
<dbReference type="Proteomes" id="UP000000246">
    <property type="component" value="Chromosome"/>
</dbReference>
<dbReference type="GO" id="GO:0005829">
    <property type="term" value="C:cytosol"/>
    <property type="evidence" value="ECO:0007669"/>
    <property type="project" value="TreeGrafter"/>
</dbReference>
<dbReference type="GO" id="GO:0004096">
    <property type="term" value="F:catalase activity"/>
    <property type="evidence" value="ECO:0007669"/>
    <property type="project" value="UniProtKB-UniRule"/>
</dbReference>
<dbReference type="GO" id="GO:0020037">
    <property type="term" value="F:heme binding"/>
    <property type="evidence" value="ECO:0007669"/>
    <property type="project" value="InterPro"/>
</dbReference>
<dbReference type="GO" id="GO:0046872">
    <property type="term" value="F:metal ion binding"/>
    <property type="evidence" value="ECO:0007669"/>
    <property type="project" value="UniProtKB-KW"/>
</dbReference>
<dbReference type="GO" id="GO:0070301">
    <property type="term" value="P:cellular response to hydrogen peroxide"/>
    <property type="evidence" value="ECO:0007669"/>
    <property type="project" value="TreeGrafter"/>
</dbReference>
<dbReference type="GO" id="GO:0042744">
    <property type="term" value="P:hydrogen peroxide catabolic process"/>
    <property type="evidence" value="ECO:0007669"/>
    <property type="project" value="UniProtKB-KW"/>
</dbReference>
<dbReference type="CDD" id="cd00649">
    <property type="entry name" value="catalase_peroxidase_1"/>
    <property type="match status" value="1"/>
</dbReference>
<dbReference type="CDD" id="cd08200">
    <property type="entry name" value="catalase_peroxidase_2"/>
    <property type="match status" value="1"/>
</dbReference>
<dbReference type="FunFam" id="1.10.420.10:FF:000002">
    <property type="entry name" value="Catalase-peroxidase"/>
    <property type="match status" value="1"/>
</dbReference>
<dbReference type="FunFam" id="1.10.420.10:FF:000004">
    <property type="entry name" value="Catalase-peroxidase"/>
    <property type="match status" value="1"/>
</dbReference>
<dbReference type="FunFam" id="1.10.520.10:FF:000002">
    <property type="entry name" value="Catalase-peroxidase"/>
    <property type="match status" value="1"/>
</dbReference>
<dbReference type="FunFam" id="1.10.520.10:FF:000004">
    <property type="entry name" value="Catalase-peroxidase"/>
    <property type="match status" value="1"/>
</dbReference>
<dbReference type="Gene3D" id="1.10.520.10">
    <property type="match status" value="2"/>
</dbReference>
<dbReference type="Gene3D" id="1.10.420.10">
    <property type="entry name" value="Peroxidase, domain 2"/>
    <property type="match status" value="2"/>
</dbReference>
<dbReference type="HAMAP" id="MF_01961">
    <property type="entry name" value="Catal_peroxid"/>
    <property type="match status" value="1"/>
</dbReference>
<dbReference type="InterPro" id="IPR000763">
    <property type="entry name" value="Catalase_peroxidase"/>
</dbReference>
<dbReference type="InterPro" id="IPR002016">
    <property type="entry name" value="Haem_peroxidase"/>
</dbReference>
<dbReference type="InterPro" id="IPR010255">
    <property type="entry name" value="Haem_peroxidase_sf"/>
</dbReference>
<dbReference type="InterPro" id="IPR019794">
    <property type="entry name" value="Peroxidases_AS"/>
</dbReference>
<dbReference type="InterPro" id="IPR019793">
    <property type="entry name" value="Peroxidases_heam-ligand_BS"/>
</dbReference>
<dbReference type="NCBIfam" id="TIGR00198">
    <property type="entry name" value="cat_per_HPI"/>
    <property type="match status" value="1"/>
</dbReference>
<dbReference type="NCBIfam" id="NF011635">
    <property type="entry name" value="PRK15061.1"/>
    <property type="match status" value="1"/>
</dbReference>
<dbReference type="PANTHER" id="PTHR30555:SF0">
    <property type="entry name" value="CATALASE-PEROXIDASE"/>
    <property type="match status" value="1"/>
</dbReference>
<dbReference type="PANTHER" id="PTHR30555">
    <property type="entry name" value="HYDROPEROXIDASE I, BIFUNCTIONAL CATALASE-PEROXIDASE"/>
    <property type="match status" value="1"/>
</dbReference>
<dbReference type="Pfam" id="PF00141">
    <property type="entry name" value="peroxidase"/>
    <property type="match status" value="2"/>
</dbReference>
<dbReference type="PRINTS" id="PR00460">
    <property type="entry name" value="BPEROXIDASE"/>
</dbReference>
<dbReference type="PRINTS" id="PR00458">
    <property type="entry name" value="PEROXIDASE"/>
</dbReference>
<dbReference type="SUPFAM" id="SSF48113">
    <property type="entry name" value="Heme-dependent peroxidases"/>
    <property type="match status" value="2"/>
</dbReference>
<dbReference type="PROSITE" id="PS00435">
    <property type="entry name" value="PEROXIDASE_1"/>
    <property type="match status" value="1"/>
</dbReference>
<dbReference type="PROSITE" id="PS00436">
    <property type="entry name" value="PEROXIDASE_2"/>
    <property type="match status" value="1"/>
</dbReference>
<dbReference type="PROSITE" id="PS50873">
    <property type="entry name" value="PEROXIDASE_4"/>
    <property type="match status" value="1"/>
</dbReference>
<proteinExistence type="inferred from homology"/>
<name>KATG_BRASB</name>
<keyword id="KW-0349">Heme</keyword>
<keyword id="KW-0376">Hydrogen peroxide</keyword>
<keyword id="KW-0408">Iron</keyword>
<keyword id="KW-0479">Metal-binding</keyword>
<keyword id="KW-0560">Oxidoreductase</keyword>
<keyword id="KW-0575">Peroxidase</keyword>
<keyword id="KW-1185">Reference proteome</keyword>
<evidence type="ECO:0000255" key="1">
    <source>
        <dbReference type="HAMAP-Rule" id="MF_01961"/>
    </source>
</evidence>
<evidence type="ECO:0000256" key="2">
    <source>
        <dbReference type="SAM" id="MobiDB-lite"/>
    </source>
</evidence>
<protein>
    <recommendedName>
        <fullName evidence="1">Catalase-peroxidase</fullName>
        <shortName evidence="1">CP</shortName>
        <ecNumber evidence="1">1.11.1.21</ecNumber>
    </recommendedName>
    <alternativeName>
        <fullName evidence="1">Peroxidase/catalase</fullName>
    </alternativeName>
</protein>
<feature type="chain" id="PRO_0000354728" description="Catalase-peroxidase">
    <location>
        <begin position="1"/>
        <end position="726"/>
    </location>
</feature>
<feature type="region of interest" description="Disordered" evidence="2">
    <location>
        <begin position="334"/>
        <end position="359"/>
    </location>
</feature>
<feature type="active site" description="Proton acceptor" evidence="1">
    <location>
        <position position="91"/>
    </location>
</feature>
<feature type="binding site" description="axial binding residue" evidence="1">
    <location>
        <position position="254"/>
    </location>
    <ligand>
        <name>heme b</name>
        <dbReference type="ChEBI" id="CHEBI:60344"/>
    </ligand>
    <ligandPart>
        <name>Fe</name>
        <dbReference type="ChEBI" id="CHEBI:18248"/>
    </ligandPart>
</feature>
<feature type="site" description="Transition state stabilizer" evidence="1">
    <location>
        <position position="87"/>
    </location>
</feature>
<feature type="cross-link" description="Tryptophyl-tyrosyl-methioninium (Trp-Tyr) (with M-239)" evidence="1">
    <location>
        <begin position="90"/>
        <end position="213"/>
    </location>
</feature>
<feature type="cross-link" description="Tryptophyl-tyrosyl-methioninium (Tyr-Met) (with W-90)" evidence="1">
    <location>
        <begin position="213"/>
        <end position="239"/>
    </location>
</feature>
<sequence length="726" mass="79061">MDDVSKCPFSGGVKGFKNKDWWPNQLDLSVLHQHSNLSDPLGEAFDYAKEFKSLDLDALVKDLHALMTDSQEWWPADFGHYGPLFIRMAWHAAGTYRIGDGRGGAGTGQQRFAPLNSWPDNANLDKARRLLWPIKQKYGQKISWADLFVLTGNVALESMGFKTFGFGGGRADTWEPEQDIYWGPEGKWLADERYSGDRELAGSLAAVQMGLIYVNPEGPNGNPDPLAAARDIRETFARMAMNDEETVALIAGGHTFGKTHGAGDASLVGAEPEGADIAQQGLGWASKYGSGKGGDAITSGLEVIWTTTPTKWSNNFFWNLFGYEWELTKSPAGAHQWKPKHGAGANTVPDAHDPSKRHAPSMLTTDLALRFDPAYEKISRRFLENPDQFADAFARAWFKLTHRDMGPKVRYLGPLVPKEDLVWQDPVPALDHPVVDDKDVATLKSKILASGLSVGQLISTAWASASTFRGSDKRGGANGARIRLAPQKDWAVNNPAELAKVLSTLEGIQKEFNASATGGKKISIADLIVLAGNAGVEAAAKKAGVDVAVPFAPGRTDASQEQTDVESFAVLEPTHDGFRNYLSGKQWLSGEELLVDKAQLLTLTAPEMTVLVGGLRVLGANANGSKHGVFTAQTETLSNDFFVNLLDMGVAWTPVDKGEHTFEGRDRKSGAVKWTATRADLIFGSHSQLRALAEVYASSDAKQKFVKDFVAAWTKVMNLDRFDLKA</sequence>
<reference key="1">
    <citation type="journal article" date="2007" name="Science">
        <title>Legumes symbioses: absence of nod genes in photosynthetic bradyrhizobia.</title>
        <authorList>
            <person name="Giraud E."/>
            <person name="Moulin L."/>
            <person name="Vallenet D."/>
            <person name="Barbe V."/>
            <person name="Cytryn E."/>
            <person name="Avarre J.-C."/>
            <person name="Jaubert M."/>
            <person name="Simon D."/>
            <person name="Cartieaux F."/>
            <person name="Prin Y."/>
            <person name="Bena G."/>
            <person name="Hannibal L."/>
            <person name="Fardoux J."/>
            <person name="Kojadinovic M."/>
            <person name="Vuillet L."/>
            <person name="Lajus A."/>
            <person name="Cruveiller S."/>
            <person name="Rouy Z."/>
            <person name="Mangenot S."/>
            <person name="Segurens B."/>
            <person name="Dossat C."/>
            <person name="Franck W.L."/>
            <person name="Chang W.-S."/>
            <person name="Saunders E."/>
            <person name="Bruce D."/>
            <person name="Richardson P."/>
            <person name="Normand P."/>
            <person name="Dreyfus B."/>
            <person name="Pignol D."/>
            <person name="Stacey G."/>
            <person name="Emerich D."/>
            <person name="Vermeglio A."/>
            <person name="Medigue C."/>
            <person name="Sadowsky M."/>
        </authorList>
    </citation>
    <scope>NUCLEOTIDE SEQUENCE [LARGE SCALE GENOMIC DNA]</scope>
    <source>
        <strain>BTAi1 / ATCC BAA-1182</strain>
    </source>
</reference>
<gene>
    <name evidence="1" type="primary">katG</name>
    <name type="ordered locus">BBta_6389</name>
</gene>
<comment type="function">
    <text evidence="1">Bifunctional enzyme with both catalase and broad-spectrum peroxidase activity.</text>
</comment>
<comment type="catalytic activity">
    <reaction evidence="1">
        <text>H2O2 + AH2 = A + 2 H2O</text>
        <dbReference type="Rhea" id="RHEA:30275"/>
        <dbReference type="ChEBI" id="CHEBI:13193"/>
        <dbReference type="ChEBI" id="CHEBI:15377"/>
        <dbReference type="ChEBI" id="CHEBI:16240"/>
        <dbReference type="ChEBI" id="CHEBI:17499"/>
        <dbReference type="EC" id="1.11.1.21"/>
    </reaction>
</comment>
<comment type="catalytic activity">
    <reaction evidence="1">
        <text>2 H2O2 = O2 + 2 H2O</text>
        <dbReference type="Rhea" id="RHEA:20309"/>
        <dbReference type="ChEBI" id="CHEBI:15377"/>
        <dbReference type="ChEBI" id="CHEBI:15379"/>
        <dbReference type="ChEBI" id="CHEBI:16240"/>
        <dbReference type="EC" id="1.11.1.21"/>
    </reaction>
</comment>
<comment type="cofactor">
    <cofactor evidence="1">
        <name>heme b</name>
        <dbReference type="ChEBI" id="CHEBI:60344"/>
    </cofactor>
    <text evidence="1">Binds 1 heme b (iron(II)-protoporphyrin IX) group per dimer.</text>
</comment>
<comment type="subunit">
    <text evidence="1">Homodimer or homotetramer.</text>
</comment>
<comment type="PTM">
    <text evidence="1">Formation of the three residue Trp-Tyr-Met cross-link is important for the catalase, but not the peroxidase activity of the enzyme.</text>
</comment>
<comment type="similarity">
    <text evidence="1">Belongs to the peroxidase family. Peroxidase/catalase subfamily.</text>
</comment>
<accession>A5EQ55</accession>
<organism>
    <name type="scientific">Bradyrhizobium sp. (strain BTAi1 / ATCC BAA-1182)</name>
    <dbReference type="NCBI Taxonomy" id="288000"/>
    <lineage>
        <taxon>Bacteria</taxon>
        <taxon>Pseudomonadati</taxon>
        <taxon>Pseudomonadota</taxon>
        <taxon>Alphaproteobacteria</taxon>
        <taxon>Hyphomicrobiales</taxon>
        <taxon>Nitrobacteraceae</taxon>
        <taxon>Bradyrhizobium</taxon>
    </lineage>
</organism>